<organism>
    <name type="scientific">Geobacter sp. (strain M21)</name>
    <dbReference type="NCBI Taxonomy" id="443144"/>
    <lineage>
        <taxon>Bacteria</taxon>
        <taxon>Pseudomonadati</taxon>
        <taxon>Thermodesulfobacteriota</taxon>
        <taxon>Desulfuromonadia</taxon>
        <taxon>Geobacterales</taxon>
        <taxon>Geobacteraceae</taxon>
        <taxon>Geobacter</taxon>
    </lineage>
</organism>
<reference key="1">
    <citation type="submission" date="2009-07" db="EMBL/GenBank/DDBJ databases">
        <title>Complete sequence of Geobacter sp. M21.</title>
        <authorList>
            <consortium name="US DOE Joint Genome Institute"/>
            <person name="Lucas S."/>
            <person name="Copeland A."/>
            <person name="Lapidus A."/>
            <person name="Glavina del Rio T."/>
            <person name="Dalin E."/>
            <person name="Tice H."/>
            <person name="Bruce D."/>
            <person name="Goodwin L."/>
            <person name="Pitluck S."/>
            <person name="Saunders E."/>
            <person name="Brettin T."/>
            <person name="Detter J.C."/>
            <person name="Han C."/>
            <person name="Larimer F."/>
            <person name="Land M."/>
            <person name="Hauser L."/>
            <person name="Kyrpides N."/>
            <person name="Ovchinnikova G."/>
            <person name="Lovley D."/>
        </authorList>
    </citation>
    <scope>NUCLEOTIDE SEQUENCE [LARGE SCALE GENOMIC DNA]</scope>
    <source>
        <strain>M21</strain>
    </source>
</reference>
<proteinExistence type="inferred from homology"/>
<feature type="chain" id="PRO_1000215643" description="tRNA U34 carboxymethyltransferase">
    <location>
        <begin position="1"/>
        <end position="323"/>
    </location>
</feature>
<feature type="binding site" evidence="1">
    <location>
        <position position="91"/>
    </location>
    <ligand>
        <name>carboxy-S-adenosyl-L-methionine</name>
        <dbReference type="ChEBI" id="CHEBI:134278"/>
    </ligand>
</feature>
<feature type="binding site" evidence="1">
    <location>
        <position position="105"/>
    </location>
    <ligand>
        <name>carboxy-S-adenosyl-L-methionine</name>
        <dbReference type="ChEBI" id="CHEBI:134278"/>
    </ligand>
</feature>
<feature type="binding site" evidence="1">
    <location>
        <position position="110"/>
    </location>
    <ligand>
        <name>carboxy-S-adenosyl-L-methionine</name>
        <dbReference type="ChEBI" id="CHEBI:134278"/>
    </ligand>
</feature>
<feature type="binding site" evidence="1">
    <location>
        <position position="130"/>
    </location>
    <ligand>
        <name>carboxy-S-adenosyl-L-methionine</name>
        <dbReference type="ChEBI" id="CHEBI:134278"/>
    </ligand>
</feature>
<feature type="binding site" evidence="1">
    <location>
        <begin position="180"/>
        <end position="181"/>
    </location>
    <ligand>
        <name>carboxy-S-adenosyl-L-methionine</name>
        <dbReference type="ChEBI" id="CHEBI:134278"/>
    </ligand>
</feature>
<feature type="binding site" evidence="1">
    <location>
        <position position="196"/>
    </location>
    <ligand>
        <name>carboxy-S-adenosyl-L-methionine</name>
        <dbReference type="ChEBI" id="CHEBI:134278"/>
    </ligand>
</feature>
<feature type="binding site" evidence="1">
    <location>
        <position position="200"/>
    </location>
    <ligand>
        <name>carboxy-S-adenosyl-L-methionine</name>
        <dbReference type="ChEBI" id="CHEBI:134278"/>
    </ligand>
</feature>
<feature type="binding site" evidence="1">
    <location>
        <position position="315"/>
    </location>
    <ligand>
        <name>carboxy-S-adenosyl-L-methionine</name>
        <dbReference type="ChEBI" id="CHEBI:134278"/>
    </ligand>
</feature>
<evidence type="ECO:0000255" key="1">
    <source>
        <dbReference type="HAMAP-Rule" id="MF_01590"/>
    </source>
</evidence>
<accession>C6E229</accession>
<dbReference type="EC" id="2.5.1.-" evidence="1"/>
<dbReference type="EMBL" id="CP001661">
    <property type="protein sequence ID" value="ACT18913.1"/>
    <property type="molecule type" value="Genomic_DNA"/>
</dbReference>
<dbReference type="SMR" id="C6E229"/>
<dbReference type="STRING" id="443144.GM21_2881"/>
<dbReference type="KEGG" id="gem:GM21_2881"/>
<dbReference type="eggNOG" id="COG0500">
    <property type="taxonomic scope" value="Bacteria"/>
</dbReference>
<dbReference type="HOGENOM" id="CLU_052665_0_0_7"/>
<dbReference type="OrthoDB" id="9765084at2"/>
<dbReference type="GO" id="GO:0008168">
    <property type="term" value="F:methyltransferase activity"/>
    <property type="evidence" value="ECO:0007669"/>
    <property type="project" value="TreeGrafter"/>
</dbReference>
<dbReference type="GO" id="GO:0016765">
    <property type="term" value="F:transferase activity, transferring alkyl or aryl (other than methyl) groups"/>
    <property type="evidence" value="ECO:0007669"/>
    <property type="project" value="InterPro"/>
</dbReference>
<dbReference type="GO" id="GO:0002098">
    <property type="term" value="P:tRNA wobble uridine modification"/>
    <property type="evidence" value="ECO:0007669"/>
    <property type="project" value="InterPro"/>
</dbReference>
<dbReference type="CDD" id="cd02440">
    <property type="entry name" value="AdoMet_MTases"/>
    <property type="match status" value="1"/>
</dbReference>
<dbReference type="Gene3D" id="3.40.50.150">
    <property type="entry name" value="Vaccinia Virus protein VP39"/>
    <property type="match status" value="1"/>
</dbReference>
<dbReference type="HAMAP" id="MF_01590">
    <property type="entry name" value="tRNA_carboxymethyltr_CmoB"/>
    <property type="match status" value="1"/>
</dbReference>
<dbReference type="InterPro" id="IPR010017">
    <property type="entry name" value="CmoB"/>
</dbReference>
<dbReference type="InterPro" id="IPR027555">
    <property type="entry name" value="Mo5U34_MeTrfas-like"/>
</dbReference>
<dbReference type="InterPro" id="IPR029063">
    <property type="entry name" value="SAM-dependent_MTases_sf"/>
</dbReference>
<dbReference type="NCBIfam" id="NF011650">
    <property type="entry name" value="PRK15068.1"/>
    <property type="match status" value="1"/>
</dbReference>
<dbReference type="NCBIfam" id="TIGR00452">
    <property type="entry name" value="tRNA 5-methoxyuridine(34)/uridine 5-oxyacetic acid(34) synthase CmoB"/>
    <property type="match status" value="1"/>
</dbReference>
<dbReference type="PANTHER" id="PTHR43464">
    <property type="entry name" value="METHYLTRANSFERASE"/>
    <property type="match status" value="1"/>
</dbReference>
<dbReference type="PANTHER" id="PTHR43464:SF95">
    <property type="entry name" value="TRNA U34 CARBOXYMETHYLTRANSFERASE"/>
    <property type="match status" value="1"/>
</dbReference>
<dbReference type="Pfam" id="PF08003">
    <property type="entry name" value="Methyltransf_9"/>
    <property type="match status" value="1"/>
</dbReference>
<dbReference type="SUPFAM" id="SSF53335">
    <property type="entry name" value="S-adenosyl-L-methionine-dependent methyltransferases"/>
    <property type="match status" value="1"/>
</dbReference>
<gene>
    <name evidence="1" type="primary">cmoB</name>
    <name type="ordered locus">GM21_2881</name>
</gene>
<protein>
    <recommendedName>
        <fullName evidence="1">tRNA U34 carboxymethyltransferase</fullName>
        <ecNumber evidence="1">2.5.1.-</ecNumber>
    </recommendedName>
</protein>
<name>CMOB_GEOSM</name>
<sequence>MSNYDALYSQLVAMGQERWAEQLQATLPDKLALESTAKMAGWQSAMQSLPEIRPSRIELKENVTIGTSDDLGDINREELIALLQAFHPWRKGPYNFFGIEIDTEWRSDWKWERLLPHIQPLAGRRVLDVGCGNGYHGWRMRGAGADFVLGIDPFLLSVQQFQVMQRYLRDPQHHVIPIGIEEVPPNLACFDSVFSMGVLYHRRSPLDHLFELKGCLRPGGELILETLIVEGKRETIFMPPGRYAKMRNVWFIPSIEAMTLWLERCGFTDIGCVDTNRTSREEQRSTGWMRFESLADFLDPNDAEKTIEGHPAPLRAIFTATKL</sequence>
<comment type="function">
    <text evidence="1">Catalyzes carboxymethyl transfer from carboxy-S-adenosyl-L-methionine (Cx-SAM) to 5-hydroxyuridine (ho5U) to form 5-carboxymethoxyuridine (cmo5U) at position 34 in tRNAs.</text>
</comment>
<comment type="catalytic activity">
    <reaction evidence="1">
        <text>carboxy-S-adenosyl-L-methionine + 5-hydroxyuridine(34) in tRNA = 5-carboxymethoxyuridine(34) in tRNA + S-adenosyl-L-homocysteine + H(+)</text>
        <dbReference type="Rhea" id="RHEA:52848"/>
        <dbReference type="Rhea" id="RHEA-COMP:13381"/>
        <dbReference type="Rhea" id="RHEA-COMP:13383"/>
        <dbReference type="ChEBI" id="CHEBI:15378"/>
        <dbReference type="ChEBI" id="CHEBI:57856"/>
        <dbReference type="ChEBI" id="CHEBI:134278"/>
        <dbReference type="ChEBI" id="CHEBI:136877"/>
        <dbReference type="ChEBI" id="CHEBI:136879"/>
    </reaction>
</comment>
<comment type="subunit">
    <text evidence="1">Homotetramer.</text>
</comment>
<comment type="similarity">
    <text evidence="1">Belongs to the class I-like SAM-binding methyltransferase superfamily. CmoB family.</text>
</comment>
<keyword id="KW-0808">Transferase</keyword>
<keyword id="KW-0819">tRNA processing</keyword>